<name>CLE4D_GLORO</name>
<feature type="signal peptide" evidence="2">
    <location>
        <begin position="1"/>
        <end position="21"/>
    </location>
</feature>
<feature type="chain" id="PRO_5000539265" description="CLAVATA3/ESR (CLE)-related protein 4D" evidence="2">
    <location>
        <begin position="22"/>
        <end position="210"/>
    </location>
</feature>
<feature type="repeat" description="A-1">
    <location>
        <begin position="127"/>
        <end position="135"/>
    </location>
</feature>
<feature type="repeat" description="CLE-1">
    <location>
        <begin position="136"/>
        <end position="147"/>
    </location>
</feature>
<feature type="repeat" description="A-2">
    <location>
        <begin position="148"/>
        <end position="156"/>
    </location>
</feature>
<feature type="repeat" description="CLE-2">
    <location>
        <begin position="157"/>
        <end position="168"/>
    </location>
</feature>
<feature type="repeat" description="A-3">
    <location>
        <begin position="169"/>
        <end position="177"/>
    </location>
</feature>
<feature type="repeat" description="CLE-3">
    <location>
        <begin position="178"/>
        <end position="189"/>
    </location>
</feature>
<feature type="repeat" description="A-4">
    <location>
        <begin position="190"/>
        <end position="198"/>
    </location>
</feature>
<feature type="repeat" description="CLE-4">
    <location>
        <begin position="199"/>
        <end position="210"/>
    </location>
</feature>
<feature type="region of interest" description="Required for secretion from the host cytoplasm to the host apoplasm" evidence="1">
    <location>
        <begin position="21"/>
        <end position="83"/>
    </location>
</feature>
<feature type="region of interest" description="Disordered" evidence="4">
    <location>
        <begin position="115"/>
        <end position="210"/>
    </location>
</feature>
<feature type="region of interest" description="4 X approximate repeat A">
    <location>
        <begin position="129"/>
        <end position="198"/>
    </location>
</feature>
<feature type="region of interest" description="4 X approximate repeat CLE">
    <location>
        <begin position="136"/>
        <end position="210"/>
    </location>
</feature>
<feature type="compositionally biased region" description="Basic and acidic residues" evidence="4">
    <location>
        <begin position="125"/>
        <end position="137"/>
    </location>
</feature>
<feature type="compositionally biased region" description="Basic and acidic residues" evidence="4">
    <location>
        <begin position="144"/>
        <end position="158"/>
    </location>
</feature>
<feature type="compositionally biased region" description="Basic and acidic residues" evidence="4">
    <location>
        <begin position="165"/>
        <end position="179"/>
    </location>
</feature>
<feature type="compositionally biased region" description="Basic and acidic residues" evidence="4">
    <location>
        <begin position="186"/>
        <end position="200"/>
    </location>
</feature>
<feature type="glycosylation site" description="N-linked (GlcNAc...) asparagine" evidence="3">
    <location>
        <position position="32"/>
    </location>
</feature>
<feature type="glycosylation site" description="N-linked (GlcNAc...) asparagine" evidence="3">
    <location>
        <position position="59"/>
    </location>
</feature>
<comment type="function">
    <text evidence="5">Mimics host plant CLE extracellular signal peptides that regulate cell fate. May play a role in the differentiation or division of feeding cells (syncytia) induced in plant roots during infection.</text>
</comment>
<comment type="subcellular location">
    <subcellularLocation>
        <location evidence="1">Secreted</location>
    </subcellularLocation>
    <subcellularLocation>
        <location evidence="1">Host cytoplasm</location>
    </subcellularLocation>
    <subcellularLocation>
        <location evidence="1">Host extracellular space</location>
    </subcellularLocation>
    <subcellularLocation>
        <location evidence="1">Secreted</location>
        <location evidence="1">Extracellular space</location>
        <location evidence="1">Apoplast</location>
    </subcellularLocation>
    <text evidence="1">Present in secretory granules within the dorsal esophageal gland secretory cell and in the dorsal gland ampulla (collecting reservoir) at the base of the nematode stylet. Secreted into host root cells via the nematode stylet to transform the recipient cells into enlarged multinucleate feeding cells called giant-cells or syncytia. Secreted to the host apoplasm from its cytoplasm via a plant secretory pathway (By similarity).</text>
</comment>
<comment type="tissue specificity">
    <text evidence="5">Highly expressed exclusively within the dorsal esophageal gland cell during syncytium formation in host plants.</text>
</comment>
<comment type="developmental stage">
    <text evidence="5">Strongly up-regulated during root colonization, from the onset of syncytium formation by parasitic second-stage juveniles (pJ2) through the J3?J4 molts of sedentary life stages that become adult females.</text>
</comment>
<comment type="similarity">
    <text evidence="6">Belongs to the CLV3/ESR signal peptide family.</text>
</comment>
<gene>
    <name type="primary">CLE-4D</name>
</gene>
<reference key="1">
    <citation type="journal article" date="2009" name="Mol. Plant Microbe Interact.">
        <title>Structural and functional diversity of CLAVATA3/ESR (CLE)-like genes from the potato cyst nematode Globodera rostochiensis.</title>
        <authorList>
            <person name="Lu S.-W."/>
            <person name="Chen S."/>
            <person name="Wang J."/>
            <person name="Yu H."/>
            <person name="Chronis D."/>
            <person name="Mitchum M.G."/>
            <person name="Wang X."/>
        </authorList>
    </citation>
    <scope>NUCLEOTIDE SEQUENCE [GENOMIC DNA / MRNA]</scope>
    <scope>FUNCTION</scope>
    <scope>TISSUE SPECIFICITY</scope>
    <scope>DEVELOPMENTAL STAGE</scope>
</reference>
<dbReference type="EMBL" id="EU386837">
    <property type="protein sequence ID" value="ACY70456.1"/>
    <property type="molecule type" value="mRNA"/>
</dbReference>
<dbReference type="EMBL" id="EU386844">
    <property type="protein sequence ID" value="ACY70463.1"/>
    <property type="molecule type" value="Genomic_DNA"/>
</dbReference>
<dbReference type="GlyCosmos" id="D1FNK5">
    <property type="glycosylation" value="2 sites, No reported glycans"/>
</dbReference>
<dbReference type="WBParaSite" id="Gr19_v10_g16098.t1">
    <property type="protein sequence ID" value="Gr19_v10_g16098.t1"/>
    <property type="gene ID" value="Gr19_v10_g16098"/>
</dbReference>
<dbReference type="Proteomes" id="UP000887572">
    <property type="component" value="Unplaced"/>
</dbReference>
<dbReference type="GO" id="GO:0005576">
    <property type="term" value="C:extracellular region"/>
    <property type="evidence" value="ECO:0007669"/>
    <property type="project" value="UniProtKB-SubCell"/>
</dbReference>
<dbReference type="GO" id="GO:0030430">
    <property type="term" value="C:host cell cytoplasm"/>
    <property type="evidence" value="ECO:0007669"/>
    <property type="project" value="UniProtKB-SubCell"/>
</dbReference>
<dbReference type="GO" id="GO:0043655">
    <property type="term" value="C:host extracellular space"/>
    <property type="evidence" value="ECO:0007669"/>
    <property type="project" value="UniProtKB-SubCell"/>
</dbReference>
<dbReference type="GO" id="GO:0033612">
    <property type="term" value="F:receptor serine/threonine kinase binding"/>
    <property type="evidence" value="ECO:0007669"/>
    <property type="project" value="InterPro"/>
</dbReference>
<dbReference type="GO" id="GO:0030154">
    <property type="term" value="P:cell differentiation"/>
    <property type="evidence" value="ECO:0007669"/>
    <property type="project" value="UniProtKB-KW"/>
</dbReference>
<dbReference type="InterPro" id="IPR044962">
    <property type="entry name" value="CLV3/ESR"/>
</dbReference>
<dbReference type="PANTHER" id="PTHR36349">
    <property type="entry name" value="PROTEIN CLAVATA 3"/>
    <property type="match status" value="1"/>
</dbReference>
<dbReference type="PANTHER" id="PTHR36349:SF2">
    <property type="entry name" value="PROTEIN CLAVATA 3"/>
    <property type="match status" value="1"/>
</dbReference>
<organism>
    <name type="scientific">Globodera rostochiensis</name>
    <name type="common">Golden nematode worm</name>
    <name type="synonym">Heterodera rostochiensis</name>
    <dbReference type="NCBI Taxonomy" id="31243"/>
    <lineage>
        <taxon>Eukaryota</taxon>
        <taxon>Metazoa</taxon>
        <taxon>Ecdysozoa</taxon>
        <taxon>Nematoda</taxon>
        <taxon>Chromadorea</taxon>
        <taxon>Rhabditida</taxon>
        <taxon>Tylenchina</taxon>
        <taxon>Tylenchomorpha</taxon>
        <taxon>Tylenchoidea</taxon>
        <taxon>Heteroderidae</taxon>
        <taxon>Heteroderinae</taxon>
        <taxon>Globodera</taxon>
    </lineage>
</organism>
<accession>D1FNK5</accession>
<sequence length="210" mass="22979">MAKNAMLCLLILSVVLALAFATNKKDDEEPENHSTGIFGKVGRVVTVALAMSSRLGGANATRGGGAVYGRNLKSNQLPNNNWMAPPPPMAMRSAKVYDSKHSPAEYLKKFAQDFRRKTGTHSQRHHEETTLEQEKRGAPAGPDPIHHQDTTFEQEKRGAPAGPDPIHHQDTTLEQEKRVAGAGPDPIHHQDTKFEQEKRGAPAGPDPIHH</sequence>
<protein>
    <recommendedName>
        <fullName>CLAVATA3/ESR (CLE)-related protein 4D</fullName>
    </recommendedName>
</protein>
<proteinExistence type="evidence at transcript level"/>
<evidence type="ECO:0000250" key="1"/>
<evidence type="ECO:0000255" key="2"/>
<evidence type="ECO:0000255" key="3">
    <source>
        <dbReference type="PROSITE-ProRule" id="PRU00498"/>
    </source>
</evidence>
<evidence type="ECO:0000256" key="4">
    <source>
        <dbReference type="SAM" id="MobiDB-lite"/>
    </source>
</evidence>
<evidence type="ECO:0000269" key="5">
    <source>
    </source>
</evidence>
<evidence type="ECO:0000305" key="6"/>
<keyword id="KW-0052">Apoplast</keyword>
<keyword id="KW-0221">Differentiation</keyword>
<keyword id="KW-0325">Glycoprotein</keyword>
<keyword id="KW-1035">Host cytoplasm</keyword>
<keyword id="KW-1185">Reference proteome</keyword>
<keyword id="KW-0677">Repeat</keyword>
<keyword id="KW-0964">Secreted</keyword>
<keyword id="KW-0732">Signal</keyword>